<evidence type="ECO:0000250" key="1"/>
<evidence type="ECO:0000255" key="2"/>
<evidence type="ECO:0000256" key="3">
    <source>
        <dbReference type="SAM" id="MobiDB-lite"/>
    </source>
</evidence>
<evidence type="ECO:0000305" key="4"/>
<comment type="function">
    <text evidence="1">Component of the post-replicative DNA mismatch repair system (MMR). Heterodimerizes with MSH2 to form MutS beta, which binds to DNA mismatches thereby initiating DNA repair. MSH3 provides substrate-binding and substrate specificity to the complex. When bound, the MutS beta heterodimer bends the DNA helix and shields approximately 20 base pairs. Acts mainly to repair insertion-deletion loops (IDLs) from 2 to 13 nucleotides in size, but can also repair base-base and single insertion-deletion mismatches that occur during replication. After mismatch binding, forms a ternary complex with the MutL alpha heterodimer, which is thought to be responsible for directing the downstream MMR events, including strand discrimination, excision, and resynthesis. ATP binding and hydrolysis play a pivotal role in mismatch repair functions (By similarity).</text>
</comment>
<comment type="subunit">
    <text evidence="1">Heterodimer consisting of MSH2-MSH3 (MutS beta). Forms a ternary complex with MutL alpha (MLH1-PMS1) (By similarity).</text>
</comment>
<comment type="subcellular location">
    <subcellularLocation>
        <location evidence="1">Nucleus</location>
    </subcellularLocation>
</comment>
<comment type="similarity">
    <text evidence="4">Belongs to the DNA mismatch repair MutS family. MSH3 subfamily.</text>
</comment>
<comment type="sequence caution" evidence="4">
    <conflict type="erroneous gene model prediction">
        <sequence resource="EMBL-CDS" id="EAT88701"/>
    </conflict>
</comment>
<comment type="sequence caution" evidence="4">
    <conflict type="frameshift">
        <sequence resource="EMBL-CDS" id="EAT88701"/>
    </conflict>
</comment>
<name>MSH3_PHANO</name>
<protein>
    <recommendedName>
        <fullName>DNA mismatch repair protein MSH3</fullName>
    </recommendedName>
    <alternativeName>
        <fullName>MutS protein homolog 3</fullName>
    </alternativeName>
</protein>
<keyword id="KW-0067">ATP-binding</keyword>
<keyword id="KW-0227">DNA damage</keyword>
<keyword id="KW-0234">DNA repair</keyword>
<keyword id="KW-0238">DNA-binding</keyword>
<keyword id="KW-0547">Nucleotide-binding</keyword>
<keyword id="KW-0539">Nucleus</keyword>
<gene>
    <name type="primary">MSH3</name>
    <name type="ORF">SNOG_03496</name>
</gene>
<dbReference type="EMBL" id="CH445329">
    <property type="protein sequence ID" value="EAT88701.2"/>
    <property type="status" value="ALT_SEQ"/>
    <property type="molecule type" value="Genomic_DNA"/>
</dbReference>
<dbReference type="RefSeq" id="XP_001794057.1">
    <property type="nucleotide sequence ID" value="XM_001794005.1"/>
</dbReference>
<dbReference type="SMR" id="Q0UXL8"/>
<dbReference type="FunCoup" id="Q0UXL8">
    <property type="interactions" value="734"/>
</dbReference>
<dbReference type="STRING" id="321614.Q0UXL8"/>
<dbReference type="GeneID" id="5970920"/>
<dbReference type="KEGG" id="pno:SNOG_03496"/>
<dbReference type="VEuPathDB" id="FungiDB:JI435_034960"/>
<dbReference type="eggNOG" id="KOG0218">
    <property type="taxonomic scope" value="Eukaryota"/>
</dbReference>
<dbReference type="InParanoid" id="Q0UXL8"/>
<dbReference type="OrthoDB" id="121051at2759"/>
<dbReference type="Proteomes" id="UP000001055">
    <property type="component" value="Unassembled WGS sequence"/>
</dbReference>
<dbReference type="GO" id="GO:0005634">
    <property type="term" value="C:nucleus"/>
    <property type="evidence" value="ECO:0000318"/>
    <property type="project" value="GO_Central"/>
</dbReference>
<dbReference type="GO" id="GO:0005524">
    <property type="term" value="F:ATP binding"/>
    <property type="evidence" value="ECO:0007669"/>
    <property type="project" value="UniProtKB-KW"/>
</dbReference>
<dbReference type="GO" id="GO:0140664">
    <property type="term" value="F:ATP-dependent DNA damage sensor activity"/>
    <property type="evidence" value="ECO:0007669"/>
    <property type="project" value="InterPro"/>
</dbReference>
<dbReference type="GO" id="GO:0003690">
    <property type="term" value="F:double-stranded DNA binding"/>
    <property type="evidence" value="ECO:0000318"/>
    <property type="project" value="GO_Central"/>
</dbReference>
<dbReference type="GO" id="GO:0030983">
    <property type="term" value="F:mismatched DNA binding"/>
    <property type="evidence" value="ECO:0007669"/>
    <property type="project" value="InterPro"/>
</dbReference>
<dbReference type="GO" id="GO:0006298">
    <property type="term" value="P:mismatch repair"/>
    <property type="evidence" value="ECO:0000318"/>
    <property type="project" value="GO_Central"/>
</dbReference>
<dbReference type="GO" id="GO:0006312">
    <property type="term" value="P:mitotic recombination"/>
    <property type="evidence" value="ECO:0000318"/>
    <property type="project" value="GO_Central"/>
</dbReference>
<dbReference type="FunFam" id="3.30.420.110:FF:000008">
    <property type="entry name" value="DNA mismatch repair protein"/>
    <property type="match status" value="1"/>
</dbReference>
<dbReference type="FunFam" id="3.40.1170.10:FF:000006">
    <property type="entry name" value="DNA mismatch repair protein"/>
    <property type="match status" value="1"/>
</dbReference>
<dbReference type="FunFam" id="1.10.1420.10:FF:000004">
    <property type="entry name" value="DNA mismatch repair protein Msh3"/>
    <property type="match status" value="1"/>
</dbReference>
<dbReference type="Gene3D" id="1.10.1420.10">
    <property type="match status" value="2"/>
</dbReference>
<dbReference type="Gene3D" id="3.40.1170.10">
    <property type="entry name" value="DNA repair protein MutS, domain I"/>
    <property type="match status" value="1"/>
</dbReference>
<dbReference type="Gene3D" id="3.30.420.110">
    <property type="entry name" value="MutS, connector domain"/>
    <property type="match status" value="1"/>
</dbReference>
<dbReference type="Gene3D" id="3.40.50.300">
    <property type="entry name" value="P-loop containing nucleotide triphosphate hydrolases"/>
    <property type="match status" value="1"/>
</dbReference>
<dbReference type="InterPro" id="IPR007695">
    <property type="entry name" value="DNA_mismatch_repair_MutS-lik_N"/>
</dbReference>
<dbReference type="InterPro" id="IPR017261">
    <property type="entry name" value="DNA_mismatch_repair_MutS/MSH"/>
</dbReference>
<dbReference type="InterPro" id="IPR000432">
    <property type="entry name" value="DNA_mismatch_repair_MutS_C"/>
</dbReference>
<dbReference type="InterPro" id="IPR007861">
    <property type="entry name" value="DNA_mismatch_repair_MutS_clamp"/>
</dbReference>
<dbReference type="InterPro" id="IPR007696">
    <property type="entry name" value="DNA_mismatch_repair_MutS_core"/>
</dbReference>
<dbReference type="InterPro" id="IPR016151">
    <property type="entry name" value="DNA_mismatch_repair_MutS_N"/>
</dbReference>
<dbReference type="InterPro" id="IPR036187">
    <property type="entry name" value="DNA_mismatch_repair_MutS_sf"/>
</dbReference>
<dbReference type="InterPro" id="IPR007860">
    <property type="entry name" value="DNA_mmatch_repair_MutS_con_dom"/>
</dbReference>
<dbReference type="InterPro" id="IPR045076">
    <property type="entry name" value="MutS"/>
</dbReference>
<dbReference type="InterPro" id="IPR036678">
    <property type="entry name" value="MutS_con_dom_sf"/>
</dbReference>
<dbReference type="InterPro" id="IPR027417">
    <property type="entry name" value="P-loop_NTPase"/>
</dbReference>
<dbReference type="NCBIfam" id="NF003810">
    <property type="entry name" value="PRK05399.1"/>
    <property type="match status" value="1"/>
</dbReference>
<dbReference type="PANTHER" id="PTHR11361:SF122">
    <property type="entry name" value="DNA MISMATCH REPAIR PROTEIN MSH3"/>
    <property type="match status" value="1"/>
</dbReference>
<dbReference type="PANTHER" id="PTHR11361">
    <property type="entry name" value="DNA MISMATCH REPAIR PROTEIN MUTS FAMILY MEMBER"/>
    <property type="match status" value="1"/>
</dbReference>
<dbReference type="Pfam" id="PF01624">
    <property type="entry name" value="MutS_I"/>
    <property type="match status" value="1"/>
</dbReference>
<dbReference type="Pfam" id="PF05188">
    <property type="entry name" value="MutS_II"/>
    <property type="match status" value="1"/>
</dbReference>
<dbReference type="Pfam" id="PF05192">
    <property type="entry name" value="MutS_III"/>
    <property type="match status" value="1"/>
</dbReference>
<dbReference type="Pfam" id="PF05190">
    <property type="entry name" value="MutS_IV"/>
    <property type="match status" value="1"/>
</dbReference>
<dbReference type="Pfam" id="PF00488">
    <property type="entry name" value="MutS_V"/>
    <property type="match status" value="1"/>
</dbReference>
<dbReference type="PIRSF" id="PIRSF037677">
    <property type="entry name" value="DNA_mis_repair_Msh6"/>
    <property type="match status" value="1"/>
</dbReference>
<dbReference type="SMART" id="SM00534">
    <property type="entry name" value="MUTSac"/>
    <property type="match status" value="1"/>
</dbReference>
<dbReference type="SMART" id="SM00533">
    <property type="entry name" value="MUTSd"/>
    <property type="match status" value="1"/>
</dbReference>
<dbReference type="SUPFAM" id="SSF55271">
    <property type="entry name" value="DNA repair protein MutS, domain I"/>
    <property type="match status" value="1"/>
</dbReference>
<dbReference type="SUPFAM" id="SSF53150">
    <property type="entry name" value="DNA repair protein MutS, domain II"/>
    <property type="match status" value="1"/>
</dbReference>
<dbReference type="SUPFAM" id="SSF48334">
    <property type="entry name" value="DNA repair protein MutS, domain III"/>
    <property type="match status" value="1"/>
</dbReference>
<dbReference type="SUPFAM" id="SSF52540">
    <property type="entry name" value="P-loop containing nucleoside triphosphate hydrolases"/>
    <property type="match status" value="1"/>
</dbReference>
<dbReference type="PROSITE" id="PS00486">
    <property type="entry name" value="DNA_MISMATCH_REPAIR_2"/>
    <property type="match status" value="1"/>
</dbReference>
<reference key="1">
    <citation type="journal article" date="2007" name="Plant Cell">
        <title>Dothideomycete-plant interactions illuminated by genome sequencing and EST analysis of the wheat pathogen Stagonospora nodorum.</title>
        <authorList>
            <person name="Hane J.K."/>
            <person name="Lowe R.G.T."/>
            <person name="Solomon P.S."/>
            <person name="Tan K.-C."/>
            <person name="Schoch C.L."/>
            <person name="Spatafora J.W."/>
            <person name="Crous P.W."/>
            <person name="Kodira C.D."/>
            <person name="Birren B.W."/>
            <person name="Galagan J.E."/>
            <person name="Torriani S.F.F."/>
            <person name="McDonald B.A."/>
            <person name="Oliver R.P."/>
        </authorList>
    </citation>
    <scope>NUCLEOTIDE SEQUENCE [LARGE SCALE GENOMIC DNA]</scope>
    <source>
        <strain>SN15 / ATCC MYA-4574 / FGSC 10173</strain>
    </source>
</reference>
<accession>Q0UXL8</accession>
<organism>
    <name type="scientific">Phaeosphaeria nodorum (strain SN15 / ATCC MYA-4574 / FGSC 10173)</name>
    <name type="common">Glume blotch fungus</name>
    <name type="synonym">Parastagonospora nodorum</name>
    <dbReference type="NCBI Taxonomy" id="321614"/>
    <lineage>
        <taxon>Eukaryota</taxon>
        <taxon>Fungi</taxon>
        <taxon>Dikarya</taxon>
        <taxon>Ascomycota</taxon>
        <taxon>Pezizomycotina</taxon>
        <taxon>Dothideomycetes</taxon>
        <taxon>Pleosporomycetidae</taxon>
        <taxon>Pleosporales</taxon>
        <taxon>Pleosporineae</taxon>
        <taxon>Phaeosphaeriaceae</taxon>
        <taxon>Parastagonospora</taxon>
    </lineage>
</organism>
<feature type="chain" id="PRO_0000338527" description="DNA mismatch repair protein MSH3">
    <location>
        <begin position="1"/>
        <end position="1119"/>
    </location>
</feature>
<feature type="region of interest" description="Disordered" evidence="3">
    <location>
        <begin position="1"/>
        <end position="148"/>
    </location>
</feature>
<feature type="region of interest" description="Disordered" evidence="3">
    <location>
        <begin position="173"/>
        <end position="215"/>
    </location>
</feature>
<feature type="region of interest" description="Mispair-binding domain" evidence="1">
    <location>
        <begin position="212"/>
        <end position="339"/>
    </location>
</feature>
<feature type="compositionally biased region" description="Low complexity" evidence="3">
    <location>
        <begin position="1"/>
        <end position="19"/>
    </location>
</feature>
<feature type="compositionally biased region" description="Acidic residues" evidence="3">
    <location>
        <begin position="49"/>
        <end position="60"/>
    </location>
</feature>
<feature type="compositionally biased region" description="Basic and acidic residues" evidence="3">
    <location>
        <begin position="134"/>
        <end position="148"/>
    </location>
</feature>
<feature type="compositionally biased region" description="Acidic residues" evidence="3">
    <location>
        <begin position="183"/>
        <end position="198"/>
    </location>
</feature>
<feature type="compositionally biased region" description="Basic residues" evidence="3">
    <location>
        <begin position="204"/>
        <end position="215"/>
    </location>
</feature>
<feature type="binding site" evidence="2">
    <location>
        <begin position="896"/>
        <end position="903"/>
    </location>
    <ligand>
        <name>ATP</name>
        <dbReference type="ChEBI" id="CHEBI:30616"/>
    </ligand>
</feature>
<sequence>MAPKSSQSSQGLSQRSKQQTISSFFTPKPSQTPKAPPKPAALAVPNGADQDDDDDEDEDIAPPRQLTPARKRSIDEQHEDEEAGRSSPPKRVRVANDEPRPSLGNASATTLNAAKPPKITERTSKFLFSSSPVVRDETDAKDDAAATQKLREKLHEKFVKKLGRPDSFAELRRRNKVISEDNGNGEEGEGEEDEEEEEPAPKPTKGRKGAATKKTSKLTPMELQYLDIKRKHMDTVIVMEVGYKFKFFGEDARTASKELGIVCIPGKFRYDEHPSEAHYDRFASASFPVHRLQVHVKRLVKANHKVGVVRQLETAALKAAGNNRNTPFVRKLTNLYTKGTYVDDIEGLETPTAGAQATGYLLCVTETNAKGWGTDEKVQVGLVAVQPATGDIIYDDFEDGFMRSEIETRLLHIAPAEFLIVGDLSKATDKLIHHLSASKTNVFGDRSRVERVEKPKTMAAQAYSHISNFYADKMKSSQEGGSEQGAILDKVHQLSEHVTICLSAMITYLSDYALEHVFDLTKYFQPFSARSYMLLNGNTLSSLEIYQNQTDYTSKGSLFWTMDRTKTRFGQRLLRKWVGRPLIDKERLEERIAAVEELKEGEHTIAVDKVKFLLGKIKTDLEKVLIRIYYKKCSRPELLAALQILQDIASQYLSAKTPEQSGFSSILLSEAVSNVPKIYEDVNSFLEKINAKAAKDDDKYGFFREEFEAEDINDLKLSIASVEDDLNTHRKDAAAKLGKTKVDYVTVAGIEYLIEVKRKSVEEKKVPASWQQISATKTTLRFHTPEVKRMLQERDQYKESLAAACDTAFKRLLDDIAAKYQSLRDCVSSLATLDALLSLATLANQPGYVKPTFVETTELDIVGGRHPMVEQLLLDAYVPNDVHLSGDATRALLVTGPNMGGKSSYVRSAALIAIMGQIGSYVPAESAKLGMLDAVFTRMGALDNMLKGESTFMVELNETADILRSATSRSLIILDELGRGTSTFDGVAIAEAVLDYVIRDVGALTLFITHYQHLARLQDRFNGELKNVHMSFEERDGGKEVVFLYEVAEGTSHRSYGLNVARLAKVPEKVIETAEVKSSELEESMGISRVANMARMVKGLLEDGGEEGLERLIEGIEQL</sequence>
<proteinExistence type="inferred from homology"/>